<proteinExistence type="inferred from homology"/>
<organism>
    <name type="scientific">Cryptococcus neoformans var. neoformans serotype D (strain B-3501A)</name>
    <name type="common">Filobasidiella neoformans</name>
    <dbReference type="NCBI Taxonomy" id="283643"/>
    <lineage>
        <taxon>Eukaryota</taxon>
        <taxon>Fungi</taxon>
        <taxon>Dikarya</taxon>
        <taxon>Basidiomycota</taxon>
        <taxon>Agaricomycotina</taxon>
        <taxon>Tremellomycetes</taxon>
        <taxon>Tremellales</taxon>
        <taxon>Cryptococcaceae</taxon>
        <taxon>Cryptococcus</taxon>
        <taxon>Cryptococcus neoformans species complex</taxon>
    </lineage>
</organism>
<keyword id="KW-0539">Nucleus</keyword>
<keyword id="KW-0687">Ribonucleoprotein</keyword>
<keyword id="KW-0690">Ribosome biogenesis</keyword>
<keyword id="KW-0698">rRNA processing</keyword>
<reference key="1">
    <citation type="journal article" date="2005" name="Science">
        <title>The genome of the basidiomycetous yeast and human pathogen Cryptococcus neoformans.</title>
        <authorList>
            <person name="Loftus B.J."/>
            <person name="Fung E."/>
            <person name="Roncaglia P."/>
            <person name="Rowley D."/>
            <person name="Amedeo P."/>
            <person name="Bruno D."/>
            <person name="Vamathevan J."/>
            <person name="Miranda M."/>
            <person name="Anderson I.J."/>
            <person name="Fraser J.A."/>
            <person name="Allen J.E."/>
            <person name="Bosdet I.E."/>
            <person name="Brent M.R."/>
            <person name="Chiu R."/>
            <person name="Doering T.L."/>
            <person name="Donlin M.J."/>
            <person name="D'Souza C.A."/>
            <person name="Fox D.S."/>
            <person name="Grinberg V."/>
            <person name="Fu J."/>
            <person name="Fukushima M."/>
            <person name="Haas B.J."/>
            <person name="Huang J.C."/>
            <person name="Janbon G."/>
            <person name="Jones S.J.M."/>
            <person name="Koo H.L."/>
            <person name="Krzywinski M.I."/>
            <person name="Kwon-Chung K.J."/>
            <person name="Lengeler K.B."/>
            <person name="Maiti R."/>
            <person name="Marra M.A."/>
            <person name="Marra R.E."/>
            <person name="Mathewson C.A."/>
            <person name="Mitchell T.G."/>
            <person name="Pertea M."/>
            <person name="Riggs F.R."/>
            <person name="Salzberg S.L."/>
            <person name="Schein J.E."/>
            <person name="Shvartsbeyn A."/>
            <person name="Shin H."/>
            <person name="Shumway M."/>
            <person name="Specht C.A."/>
            <person name="Suh B.B."/>
            <person name="Tenney A."/>
            <person name="Utterback T.R."/>
            <person name="Wickes B.L."/>
            <person name="Wortman J.R."/>
            <person name="Wye N.H."/>
            <person name="Kronstad J.W."/>
            <person name="Lodge J.K."/>
            <person name="Heitman J."/>
            <person name="Davis R.W."/>
            <person name="Fraser C.M."/>
            <person name="Hyman R.W."/>
        </authorList>
    </citation>
    <scope>NUCLEOTIDE SEQUENCE [LARGE SCALE GENOMIC DNA]</scope>
    <source>
        <strain>B-3501A</strain>
    </source>
</reference>
<accession>P0CQ61</accession>
<accession>Q55IA1</accession>
<accession>Q5K7T7</accession>
<protein>
    <recommendedName>
        <fullName>Ribosome biogenesis protein NSA2</fullName>
    </recommendedName>
</protein>
<name>NSA2_CRYNB</name>
<feature type="chain" id="PRO_0000410241" description="Ribosome biogenesis protein NSA2">
    <location>
        <begin position="1"/>
        <end position="254"/>
    </location>
</feature>
<feature type="region of interest" description="Disordered" evidence="4">
    <location>
        <begin position="1"/>
        <end position="73"/>
    </location>
</feature>
<feature type="short sequence motif" description="Nuclear localization signal" evidence="3">
    <location>
        <begin position="5"/>
        <end position="12"/>
    </location>
</feature>
<feature type="compositionally biased region" description="Basic residues" evidence="4">
    <location>
        <begin position="1"/>
        <end position="10"/>
    </location>
</feature>
<feature type="compositionally biased region" description="Basic and acidic residues" evidence="4">
    <location>
        <begin position="11"/>
        <end position="30"/>
    </location>
</feature>
<feature type="compositionally biased region" description="Basic residues" evidence="4">
    <location>
        <begin position="37"/>
        <end position="59"/>
    </location>
</feature>
<feature type="compositionally biased region" description="Basic and acidic residues" evidence="4">
    <location>
        <begin position="60"/>
        <end position="73"/>
    </location>
</feature>
<evidence type="ECO:0000250" key="1"/>
<evidence type="ECO:0000250" key="2">
    <source>
        <dbReference type="UniProtKB" id="P40078"/>
    </source>
</evidence>
<evidence type="ECO:0000255" key="3">
    <source>
        <dbReference type="PROSITE-ProRule" id="PRU00768"/>
    </source>
</evidence>
<evidence type="ECO:0000256" key="4">
    <source>
        <dbReference type="SAM" id="MobiDB-lite"/>
    </source>
</evidence>
<evidence type="ECO:0000305" key="5"/>
<gene>
    <name type="primary">NSA2</name>
    <name type="ordered locus">CNBM1180</name>
</gene>
<dbReference type="EMBL" id="AAEY01000062">
    <property type="protein sequence ID" value="EAL17552.1"/>
    <property type="molecule type" value="Genomic_DNA"/>
</dbReference>
<dbReference type="RefSeq" id="XP_772199.1">
    <property type="nucleotide sequence ID" value="XM_767106.1"/>
</dbReference>
<dbReference type="SMR" id="P0CQ61"/>
<dbReference type="EnsemblFungi" id="AAW46920">
    <property type="protein sequence ID" value="AAW46920"/>
    <property type="gene ID" value="CNM01320"/>
</dbReference>
<dbReference type="GeneID" id="4939478"/>
<dbReference type="KEGG" id="cnb:CNBM1180"/>
<dbReference type="VEuPathDB" id="FungiDB:CNBM1180"/>
<dbReference type="HOGENOM" id="CLU_1070048_0_0_1"/>
<dbReference type="OrthoDB" id="1773at5206"/>
<dbReference type="GO" id="GO:0005730">
    <property type="term" value="C:nucleolus"/>
    <property type="evidence" value="ECO:0007669"/>
    <property type="project" value="UniProtKB-SubCell"/>
</dbReference>
<dbReference type="GO" id="GO:0030687">
    <property type="term" value="C:preribosome, large subunit precursor"/>
    <property type="evidence" value="ECO:0007669"/>
    <property type="project" value="EnsemblFungi"/>
</dbReference>
<dbReference type="GO" id="GO:0000466">
    <property type="term" value="P:maturation of 5.8S rRNA from tricistronic rRNA transcript (SSU-rRNA, 5.8S rRNA, LSU-rRNA)"/>
    <property type="evidence" value="ECO:0007669"/>
    <property type="project" value="EnsemblFungi"/>
</dbReference>
<dbReference type="GO" id="GO:0000463">
    <property type="term" value="P:maturation of LSU-rRNA from tricistronic rRNA transcript (SSU-rRNA, 5.8S rRNA, LSU-rRNA)"/>
    <property type="evidence" value="ECO:0007669"/>
    <property type="project" value="EnsemblFungi"/>
</dbReference>
<dbReference type="CDD" id="cd11381">
    <property type="entry name" value="NSA2"/>
    <property type="match status" value="1"/>
</dbReference>
<dbReference type="FunFam" id="2.40.10.310:FF:000001">
    <property type="entry name" value="NSA2, ribosome biogenesis homolog"/>
    <property type="match status" value="1"/>
</dbReference>
<dbReference type="Gene3D" id="2.40.10.310">
    <property type="match status" value="1"/>
</dbReference>
<dbReference type="InterPro" id="IPR039411">
    <property type="entry name" value="NSA2_fam"/>
</dbReference>
<dbReference type="InterPro" id="IPR022309">
    <property type="entry name" value="Ribosomal_Se8/biogenesis_NSA2"/>
</dbReference>
<dbReference type="PANTHER" id="PTHR12642">
    <property type="entry name" value="RIBOSOME BIOGENESIS PROTEIN NSA2 HOMOLOG"/>
    <property type="match status" value="1"/>
</dbReference>
<dbReference type="Pfam" id="PF01201">
    <property type="entry name" value="Ribosomal_S8e"/>
    <property type="match status" value="1"/>
</dbReference>
<sequence>MEEHRKRHGRRLDYEEKKRKRTAREAHKASADAQKIFGHKAKLHHARRHAEKVQMKKTLKAHDERNVKQKDDGAVKEGALPAYLLDRDGQKDAKALSSAVKDRRKDRAAKYSVPLPKVRGIAEEEMFKVIKTGKSKSKSWKRMVNKATFVGEGFTRKPVKLERFIRPMGLRMTKANVTHPELKTTFQLPILGVKKNPQSPLYTSLGVLTKGTILEVNVSELGMVTTGGKVVWSKYAQITNNPENDGCINSVLLV</sequence>
<comment type="function">
    <text evidence="1">Involved in the biogenesis of the 60S ribosomal subunit. May play a part in the quality control of pre-60S particles (By similarity).</text>
</comment>
<comment type="subunit">
    <text evidence="2">Component of the pre-66S ribosomal particle. Interacts with NOP7 and RRP1. Interacts with RSA4 (via WD repeats).</text>
</comment>
<comment type="subcellular location">
    <subcellularLocation>
        <location evidence="1">Nucleus</location>
        <location evidence="1">Nucleolus</location>
    </subcellularLocation>
</comment>
<comment type="similarity">
    <text evidence="5">Belongs to the eukaryotic ribosomal protein eS8 family. Ribosome biogenesis protein NSA2 subfamily.</text>
</comment>